<gene>
    <name type="ordered locus">CYB_0055</name>
</gene>
<keyword id="KW-1185">Reference proteome</keyword>
<dbReference type="EMBL" id="CP000240">
    <property type="protein sequence ID" value="ABD01056.1"/>
    <property type="molecule type" value="Genomic_DNA"/>
</dbReference>
<dbReference type="SMR" id="Q2JQ60"/>
<dbReference type="STRING" id="321332.CYB_0055"/>
<dbReference type="KEGG" id="cyb:CYB_0055"/>
<dbReference type="eggNOG" id="COG2052">
    <property type="taxonomic scope" value="Bacteria"/>
</dbReference>
<dbReference type="HOGENOM" id="CLU_165326_0_0_3"/>
<dbReference type="OrthoDB" id="5432174at2"/>
<dbReference type="Proteomes" id="UP000001938">
    <property type="component" value="Chromosome"/>
</dbReference>
<dbReference type="HAMAP" id="MF_01503">
    <property type="entry name" value="RemA"/>
    <property type="match status" value="1"/>
</dbReference>
<dbReference type="InterPro" id="IPR007169">
    <property type="entry name" value="RemA-like"/>
</dbReference>
<dbReference type="NCBIfam" id="NF046064">
    <property type="entry name" value="MtxBflmRegRemA"/>
    <property type="match status" value="1"/>
</dbReference>
<dbReference type="NCBIfam" id="NF003315">
    <property type="entry name" value="PRK04323.1"/>
    <property type="match status" value="1"/>
</dbReference>
<dbReference type="PANTHER" id="PTHR38449:SF1">
    <property type="entry name" value="REGULATORY PROTEIN SSL2874-RELATED"/>
    <property type="match status" value="1"/>
</dbReference>
<dbReference type="PANTHER" id="PTHR38449">
    <property type="entry name" value="REGULATORY PROTEIN TM_1690-RELATED"/>
    <property type="match status" value="1"/>
</dbReference>
<dbReference type="Pfam" id="PF04025">
    <property type="entry name" value="RemA-like"/>
    <property type="match status" value="1"/>
</dbReference>
<comment type="similarity">
    <text evidence="1">Belongs to the RemA family.</text>
</comment>
<organism>
    <name type="scientific">Synechococcus sp. (strain JA-2-3B'a(2-13))</name>
    <name type="common">Cyanobacteria bacterium Yellowstone B-Prime</name>
    <dbReference type="NCBI Taxonomy" id="321332"/>
    <lineage>
        <taxon>Bacteria</taxon>
        <taxon>Bacillati</taxon>
        <taxon>Cyanobacteriota</taxon>
        <taxon>Cyanophyceae</taxon>
        <taxon>Synechococcales</taxon>
        <taxon>Synechococcaceae</taxon>
        <taxon>Synechococcus</taxon>
    </lineage>
</organism>
<feature type="chain" id="PRO_0000236637" description="Putative regulatory protein CYB_0055">
    <location>
        <begin position="1"/>
        <end position="89"/>
    </location>
</feature>
<proteinExistence type="inferred from homology"/>
<name>Y055_SYNJB</name>
<protein>
    <recommendedName>
        <fullName evidence="1">Putative regulatory protein CYB_0055</fullName>
    </recommendedName>
</protein>
<accession>Q2JQ60</accession>
<evidence type="ECO:0000255" key="1">
    <source>
        <dbReference type="HAMAP-Rule" id="MF_01503"/>
    </source>
</evidence>
<sequence length="89" mass="9586">MDTRLINIGFGNIVAAGRVVAIVSPESAPIKRIISDARERGQLIDATYGRRTRAVIITDSGHVILSAIQPETVANRFLTAKPGLSEETE</sequence>
<reference key="1">
    <citation type="journal article" date="2007" name="ISME J.">
        <title>Population level functional diversity in a microbial community revealed by comparative genomic and metagenomic analyses.</title>
        <authorList>
            <person name="Bhaya D."/>
            <person name="Grossman A.R."/>
            <person name="Steunou A.-S."/>
            <person name="Khuri N."/>
            <person name="Cohan F.M."/>
            <person name="Hamamura N."/>
            <person name="Melendrez M.C."/>
            <person name="Bateson M.M."/>
            <person name="Ward D.M."/>
            <person name="Heidelberg J.F."/>
        </authorList>
    </citation>
    <scope>NUCLEOTIDE SEQUENCE [LARGE SCALE GENOMIC DNA]</scope>
    <source>
        <strain>JA-2-3B'a(2-13)</strain>
    </source>
</reference>